<sequence length="233" mass="25501">MEKIGVIVTAGGAGRRFGGEKPKQFLELSGIPVIIITLKRMVNLPIVGQVVLTVPENYIEVAGDLLSRYNLAGIKLTAGGTTRRESVLRGIRALTGNFSIIAVHDGVRPFFPKGALSEGVKKLSEGYGGAILAVPLRDTVKEVKDNVVISTLDRSRLYAVQTPQIFRREALLKGHALGEKQHLDAVDDSILVELCGETVAVIPGDYKNLKITWPEDLEFAEFLFTRYFAKELL</sequence>
<organism>
    <name type="scientific">Carboxydothermus hydrogenoformans (strain ATCC BAA-161 / DSM 6008 / Z-2901)</name>
    <dbReference type="NCBI Taxonomy" id="246194"/>
    <lineage>
        <taxon>Bacteria</taxon>
        <taxon>Bacillati</taxon>
        <taxon>Bacillota</taxon>
        <taxon>Clostridia</taxon>
        <taxon>Thermoanaerobacterales</taxon>
        <taxon>Thermoanaerobacteraceae</taxon>
        <taxon>Carboxydothermus</taxon>
    </lineage>
</organism>
<protein>
    <recommendedName>
        <fullName evidence="1">2-C-methyl-D-erythritol 4-phosphate cytidylyltransferase</fullName>
        <ecNumber evidence="1">2.7.7.60</ecNumber>
    </recommendedName>
    <alternativeName>
        <fullName evidence="1">4-diphosphocytidyl-2C-methyl-D-erythritol synthase</fullName>
    </alternativeName>
    <alternativeName>
        <fullName evidence="1">MEP cytidylyltransferase</fullName>
        <shortName evidence="1">MCT</shortName>
    </alternativeName>
</protein>
<name>ISPD_CARHZ</name>
<dbReference type="EC" id="2.7.7.60" evidence="1"/>
<dbReference type="EMBL" id="CP000141">
    <property type="protein sequence ID" value="ABB14750.1"/>
    <property type="molecule type" value="Genomic_DNA"/>
</dbReference>
<dbReference type="RefSeq" id="WP_011345220.1">
    <property type="nucleotide sequence ID" value="NC_007503.1"/>
</dbReference>
<dbReference type="SMR" id="Q3A9N7"/>
<dbReference type="FunCoup" id="Q3A9N7">
    <property type="interactions" value="284"/>
</dbReference>
<dbReference type="STRING" id="246194.CHY_2342"/>
<dbReference type="KEGG" id="chy:CHY_2342"/>
<dbReference type="eggNOG" id="COG1211">
    <property type="taxonomic scope" value="Bacteria"/>
</dbReference>
<dbReference type="HOGENOM" id="CLU_061281_2_2_9"/>
<dbReference type="InParanoid" id="Q3A9N7"/>
<dbReference type="OrthoDB" id="9806837at2"/>
<dbReference type="UniPathway" id="UPA00056">
    <property type="reaction ID" value="UER00093"/>
</dbReference>
<dbReference type="Proteomes" id="UP000002706">
    <property type="component" value="Chromosome"/>
</dbReference>
<dbReference type="GO" id="GO:0050518">
    <property type="term" value="F:2-C-methyl-D-erythritol 4-phosphate cytidylyltransferase activity"/>
    <property type="evidence" value="ECO:0007669"/>
    <property type="project" value="UniProtKB-UniRule"/>
</dbReference>
<dbReference type="GO" id="GO:0019288">
    <property type="term" value="P:isopentenyl diphosphate biosynthetic process, methylerythritol 4-phosphate pathway"/>
    <property type="evidence" value="ECO:0007669"/>
    <property type="project" value="UniProtKB-UniRule"/>
</dbReference>
<dbReference type="CDD" id="cd02516">
    <property type="entry name" value="CDP-ME_synthetase"/>
    <property type="match status" value="1"/>
</dbReference>
<dbReference type="FunFam" id="3.90.550.10:FF:000003">
    <property type="entry name" value="2-C-methyl-D-erythritol 4-phosphate cytidylyltransferase"/>
    <property type="match status" value="1"/>
</dbReference>
<dbReference type="Gene3D" id="3.90.550.10">
    <property type="entry name" value="Spore Coat Polysaccharide Biosynthesis Protein SpsA, Chain A"/>
    <property type="match status" value="1"/>
</dbReference>
<dbReference type="HAMAP" id="MF_00108">
    <property type="entry name" value="IspD"/>
    <property type="match status" value="1"/>
</dbReference>
<dbReference type="InterPro" id="IPR001228">
    <property type="entry name" value="IspD"/>
</dbReference>
<dbReference type="InterPro" id="IPR034683">
    <property type="entry name" value="IspD/TarI"/>
</dbReference>
<dbReference type="InterPro" id="IPR050088">
    <property type="entry name" value="IspD/TarI_cytidylyltransf_bact"/>
</dbReference>
<dbReference type="InterPro" id="IPR029044">
    <property type="entry name" value="Nucleotide-diphossugar_trans"/>
</dbReference>
<dbReference type="NCBIfam" id="TIGR00453">
    <property type="entry name" value="ispD"/>
    <property type="match status" value="1"/>
</dbReference>
<dbReference type="PANTHER" id="PTHR32125">
    <property type="entry name" value="2-C-METHYL-D-ERYTHRITOL 4-PHOSPHATE CYTIDYLYLTRANSFERASE, CHLOROPLASTIC"/>
    <property type="match status" value="1"/>
</dbReference>
<dbReference type="PANTHER" id="PTHR32125:SF4">
    <property type="entry name" value="2-C-METHYL-D-ERYTHRITOL 4-PHOSPHATE CYTIDYLYLTRANSFERASE, CHLOROPLASTIC"/>
    <property type="match status" value="1"/>
</dbReference>
<dbReference type="Pfam" id="PF01128">
    <property type="entry name" value="IspD"/>
    <property type="match status" value="1"/>
</dbReference>
<dbReference type="SUPFAM" id="SSF53448">
    <property type="entry name" value="Nucleotide-diphospho-sugar transferases"/>
    <property type="match status" value="1"/>
</dbReference>
<gene>
    <name evidence="1" type="primary">ispD</name>
    <name type="ordered locus">CHY_2342</name>
</gene>
<accession>Q3A9N7</accession>
<feature type="chain" id="PRO_0000237781" description="2-C-methyl-D-erythritol 4-phosphate cytidylyltransferase">
    <location>
        <begin position="1"/>
        <end position="233"/>
    </location>
</feature>
<feature type="site" description="Transition state stabilizer" evidence="1">
    <location>
        <position position="16"/>
    </location>
</feature>
<feature type="site" description="Transition state stabilizer" evidence="1">
    <location>
        <position position="23"/>
    </location>
</feature>
<feature type="site" description="Positions MEP for the nucleophilic attack" evidence="1">
    <location>
        <position position="154"/>
    </location>
</feature>
<feature type="site" description="Positions MEP for the nucleophilic attack" evidence="1">
    <location>
        <position position="210"/>
    </location>
</feature>
<reference key="1">
    <citation type="journal article" date="2005" name="PLoS Genet.">
        <title>Life in hot carbon monoxide: the complete genome sequence of Carboxydothermus hydrogenoformans Z-2901.</title>
        <authorList>
            <person name="Wu M."/>
            <person name="Ren Q."/>
            <person name="Durkin A.S."/>
            <person name="Daugherty S.C."/>
            <person name="Brinkac L.M."/>
            <person name="Dodson R.J."/>
            <person name="Madupu R."/>
            <person name="Sullivan S.A."/>
            <person name="Kolonay J.F."/>
            <person name="Nelson W.C."/>
            <person name="Tallon L.J."/>
            <person name="Jones K.M."/>
            <person name="Ulrich L.E."/>
            <person name="Gonzalez J.M."/>
            <person name="Zhulin I.B."/>
            <person name="Robb F.T."/>
            <person name="Eisen J.A."/>
        </authorList>
    </citation>
    <scope>NUCLEOTIDE SEQUENCE [LARGE SCALE GENOMIC DNA]</scope>
    <source>
        <strain>ATCC BAA-161 / DSM 6008 / Z-2901</strain>
    </source>
</reference>
<comment type="function">
    <text evidence="1">Catalyzes the formation of 4-diphosphocytidyl-2-C-methyl-D-erythritol from CTP and 2-C-methyl-D-erythritol 4-phosphate (MEP).</text>
</comment>
<comment type="catalytic activity">
    <reaction evidence="1">
        <text>2-C-methyl-D-erythritol 4-phosphate + CTP + H(+) = 4-CDP-2-C-methyl-D-erythritol + diphosphate</text>
        <dbReference type="Rhea" id="RHEA:13429"/>
        <dbReference type="ChEBI" id="CHEBI:15378"/>
        <dbReference type="ChEBI" id="CHEBI:33019"/>
        <dbReference type="ChEBI" id="CHEBI:37563"/>
        <dbReference type="ChEBI" id="CHEBI:57823"/>
        <dbReference type="ChEBI" id="CHEBI:58262"/>
        <dbReference type="EC" id="2.7.7.60"/>
    </reaction>
</comment>
<comment type="pathway">
    <text evidence="1">Isoprenoid biosynthesis; isopentenyl diphosphate biosynthesis via DXP pathway; isopentenyl diphosphate from 1-deoxy-D-xylulose 5-phosphate: step 2/6.</text>
</comment>
<comment type="similarity">
    <text evidence="1">Belongs to the IspD/TarI cytidylyltransferase family. IspD subfamily.</text>
</comment>
<evidence type="ECO:0000255" key="1">
    <source>
        <dbReference type="HAMAP-Rule" id="MF_00108"/>
    </source>
</evidence>
<keyword id="KW-0414">Isoprene biosynthesis</keyword>
<keyword id="KW-0548">Nucleotidyltransferase</keyword>
<keyword id="KW-1185">Reference proteome</keyword>
<keyword id="KW-0808">Transferase</keyword>
<proteinExistence type="inferred from homology"/>